<accession>P80193</accession>
<organism>
    <name type="scientific">Pseudomonas sp. (strain AK-1)</name>
    <dbReference type="NCBI Taxonomy" id="29440"/>
    <lineage>
        <taxon>Bacteria</taxon>
        <taxon>Pseudomonadati</taxon>
        <taxon>Pseudomonadota</taxon>
    </lineage>
</organism>
<proteinExistence type="evidence at protein level"/>
<feature type="chain" id="PRO_0000207089" description="Gamma-butyrobetaine dioxygenase">
    <location>
        <begin position="1"/>
        <end position="383"/>
    </location>
</feature>
<feature type="binding site" evidence="1">
    <location>
        <position position="46"/>
    </location>
    <ligand>
        <name>Zn(2+)</name>
        <dbReference type="ChEBI" id="CHEBI:29105"/>
    </ligand>
</feature>
<feature type="binding site" evidence="1">
    <location>
        <position position="48"/>
    </location>
    <ligand>
        <name>Zn(2+)</name>
        <dbReference type="ChEBI" id="CHEBI:29105"/>
    </ligand>
</feature>
<feature type="binding site" evidence="1">
    <location>
        <position position="51"/>
    </location>
    <ligand>
        <name>Zn(2+)</name>
        <dbReference type="ChEBI" id="CHEBI:29105"/>
    </ligand>
</feature>
<feature type="binding site" evidence="1">
    <location>
        <position position="91"/>
    </location>
    <ligand>
        <name>Zn(2+)</name>
        <dbReference type="ChEBI" id="CHEBI:29105"/>
    </ligand>
</feature>
<feature type="binding site" evidence="1">
    <location>
        <position position="209"/>
    </location>
    <ligand>
        <name>Fe cation</name>
        <dbReference type="ChEBI" id="CHEBI:24875"/>
        <note>catalytic</note>
    </ligand>
</feature>
<feature type="binding site" evidence="1">
    <location>
        <position position="211"/>
    </location>
    <ligand>
        <name>Fe cation</name>
        <dbReference type="ChEBI" id="CHEBI:24875"/>
        <note>catalytic</note>
    </ligand>
</feature>
<feature type="binding site" evidence="1">
    <location>
        <position position="350"/>
    </location>
    <ligand>
        <name>Fe cation</name>
        <dbReference type="ChEBI" id="CHEBI:24875"/>
        <note>catalytic</note>
    </ligand>
</feature>
<feature type="sequence variant" description="In 50% of the chains.">
    <location>
        <position position="1"/>
    </location>
</feature>
<sequence length="383" mass="43322">NAIADYRTFPLISPLASAASFASGVSVTWADGRVSPFHNLWLRDNCPCGDCVYEVTREQVFLVADVPEDIQVQAVTIGDDGRLVVQWDDGHASAYHPGWLRAHAYDAQSLAEREAARPHKHRWMQGLSLPVYDHGAVMQDDDTLLEWLLAVRDVGLTQLHGVPTEPGALIPLAKRISFIRESNFGVLFDVRSKADADSNAYTAFNLPLHTDLPTRELQPGLQFLHCLVNDATGGNSTFVDGFAIAEALRIEAPAAYRLLCETPVEFRNKDRHSDYRCTAPVIALDSSGEVREIRLANFLRAPFQMDAQRMPDYYLAYRRFIQMTREPRFCFTRRLEAGQLWCFDNRRVLHARDAFDPASGDRHFQGCYVDRDELLSRILVLQR</sequence>
<comment type="function">
    <text>Catalyzes the formation of L-carnitine from gamma-butyrobetaine.</text>
</comment>
<comment type="catalytic activity">
    <reaction>
        <text>4-(trimethylamino)butanoate + 2-oxoglutarate + O2 = carnitine + succinate + CO2</text>
        <dbReference type="Rhea" id="RHEA:24028"/>
        <dbReference type="ChEBI" id="CHEBI:15379"/>
        <dbReference type="ChEBI" id="CHEBI:16244"/>
        <dbReference type="ChEBI" id="CHEBI:16526"/>
        <dbReference type="ChEBI" id="CHEBI:16810"/>
        <dbReference type="ChEBI" id="CHEBI:17126"/>
        <dbReference type="ChEBI" id="CHEBI:30031"/>
        <dbReference type="EC" id="1.14.11.1"/>
    </reaction>
</comment>
<comment type="cofactor">
    <cofactor evidence="1">
        <name>Fe(2+)</name>
        <dbReference type="ChEBI" id="CHEBI:29033"/>
    </cofactor>
    <text evidence="1">Binds 1 Fe(2+) ion per subunit.</text>
</comment>
<comment type="cofactor">
    <cofactor>
        <name>L-ascorbate</name>
        <dbReference type="ChEBI" id="CHEBI:38290"/>
    </cofactor>
</comment>
<comment type="pathway">
    <text>Amine and polyamine biosynthesis; carnitine biosynthesis.</text>
</comment>
<comment type="subunit">
    <text>Homodimer.</text>
</comment>
<comment type="subcellular location">
    <subcellularLocation>
        <location>Cytoplasm</location>
    </subcellularLocation>
</comment>
<comment type="similarity">
    <text evidence="2">Belongs to the gamma-BBH/TMLD family.</text>
</comment>
<keyword id="KW-0124">Carnitine biosynthesis</keyword>
<keyword id="KW-0963">Cytoplasm</keyword>
<keyword id="KW-0223">Dioxygenase</keyword>
<keyword id="KW-0903">Direct protein sequencing</keyword>
<keyword id="KW-0408">Iron</keyword>
<keyword id="KW-0479">Metal-binding</keyword>
<keyword id="KW-0560">Oxidoreductase</keyword>
<keyword id="KW-0862">Zinc</keyword>
<protein>
    <recommendedName>
        <fullName>Gamma-butyrobetaine dioxygenase</fullName>
        <ecNumber>1.14.11.1</ecNumber>
    </recommendedName>
    <alternativeName>
        <fullName>Gamma-butyrobetaine hydroxylase</fullName>
        <shortName>Gamma-BBH</shortName>
    </alternativeName>
    <alternativeName>
        <fullName>Gamma-butyrobetaine,2-oxoglutarate dioxygenase</fullName>
    </alternativeName>
</protein>
<name>BODG_PSESK</name>
<evidence type="ECO:0000250" key="1"/>
<evidence type="ECO:0000305" key="2"/>
<dbReference type="EC" id="1.14.11.1"/>
<dbReference type="SMR" id="P80193"/>
<dbReference type="ChEMBL" id="CHEMBL3817724"/>
<dbReference type="BioCyc" id="MetaCyc:MONOMER-8461"/>
<dbReference type="BRENDA" id="1.14.11.1">
    <property type="organism ID" value="5085"/>
</dbReference>
<dbReference type="UniPathway" id="UPA00118"/>
<dbReference type="GO" id="GO:0005737">
    <property type="term" value="C:cytoplasm"/>
    <property type="evidence" value="ECO:0007669"/>
    <property type="project" value="UniProtKB-SubCell"/>
</dbReference>
<dbReference type="GO" id="GO:0008336">
    <property type="term" value="F:gamma-butyrobetaine dioxygenase activity"/>
    <property type="evidence" value="ECO:0007669"/>
    <property type="project" value="UniProtKB-EC"/>
</dbReference>
<dbReference type="GO" id="GO:0005506">
    <property type="term" value="F:iron ion binding"/>
    <property type="evidence" value="ECO:0007669"/>
    <property type="project" value="InterPro"/>
</dbReference>
<dbReference type="GO" id="GO:0045329">
    <property type="term" value="P:carnitine biosynthetic process"/>
    <property type="evidence" value="ECO:0007669"/>
    <property type="project" value="UniProtKB-UniPathway"/>
</dbReference>
<dbReference type="CDD" id="cd00250">
    <property type="entry name" value="CAS_like"/>
    <property type="match status" value="1"/>
</dbReference>
<dbReference type="FunFam" id="3.30.2020.30:FF:000002">
    <property type="entry name" value="Putative gamma-butyrobetaine dioxygenase"/>
    <property type="match status" value="1"/>
</dbReference>
<dbReference type="FunFam" id="3.60.130.10:FF:000001">
    <property type="entry name" value="Trimethyllysine dioxygenase, mitochondrial"/>
    <property type="match status" value="1"/>
</dbReference>
<dbReference type="Gene3D" id="3.30.2020.30">
    <property type="match status" value="1"/>
</dbReference>
<dbReference type="Gene3D" id="3.60.130.10">
    <property type="entry name" value="Clavaminate synthase-like"/>
    <property type="match status" value="1"/>
</dbReference>
<dbReference type="InterPro" id="IPR050411">
    <property type="entry name" value="AlphaKG_dependent_hydroxylases"/>
</dbReference>
<dbReference type="InterPro" id="IPR012775">
    <property type="entry name" value="GBBH-like"/>
</dbReference>
<dbReference type="InterPro" id="IPR010376">
    <property type="entry name" value="GBBH-like_N"/>
</dbReference>
<dbReference type="InterPro" id="IPR038492">
    <property type="entry name" value="GBBH-like_N_sf"/>
</dbReference>
<dbReference type="InterPro" id="IPR042098">
    <property type="entry name" value="TauD-like_sf"/>
</dbReference>
<dbReference type="InterPro" id="IPR003819">
    <property type="entry name" value="TauD/TfdA-like"/>
</dbReference>
<dbReference type="NCBIfam" id="TIGR02409">
    <property type="entry name" value="carnitine_bodg"/>
    <property type="match status" value="1"/>
</dbReference>
<dbReference type="PANTHER" id="PTHR10696">
    <property type="entry name" value="GAMMA-BUTYROBETAINE HYDROXYLASE-RELATED"/>
    <property type="match status" value="1"/>
</dbReference>
<dbReference type="PANTHER" id="PTHR10696:SF25">
    <property type="entry name" value="OXIDOREDUCTASE AIM17-RELATED"/>
    <property type="match status" value="1"/>
</dbReference>
<dbReference type="Pfam" id="PF06155">
    <property type="entry name" value="GBBH-like_N"/>
    <property type="match status" value="1"/>
</dbReference>
<dbReference type="Pfam" id="PF02668">
    <property type="entry name" value="TauD"/>
    <property type="match status" value="1"/>
</dbReference>
<dbReference type="SUPFAM" id="SSF51197">
    <property type="entry name" value="Clavaminate synthase-like"/>
    <property type="match status" value="1"/>
</dbReference>
<reference key="1">
    <citation type="journal article" date="1993" name="Eur. J. Biochem.">
        <title>Gamma-butyrobetaine hydroxylase. Structural characterization of the Pseudomonas enzyme.</title>
        <authorList>
            <person name="Rueetschi U."/>
            <person name="Nordin I."/>
            <person name="Odelhoeg B."/>
            <person name="Joernvall H."/>
            <person name="Lindstedt S."/>
        </authorList>
    </citation>
    <scope>PROTEIN SEQUENCE</scope>
</reference>